<feature type="chain" id="PRO_0000323436" description="Large ribosomal subunit protein uL11">
    <location>
        <begin position="1"/>
        <end position="166"/>
    </location>
</feature>
<feature type="strand" evidence="2">
    <location>
        <begin position="15"/>
        <end position="17"/>
    </location>
</feature>
<feature type="strand" evidence="2">
    <location>
        <begin position="24"/>
        <end position="26"/>
    </location>
</feature>
<feature type="helix" evidence="2">
    <location>
        <begin position="32"/>
        <end position="35"/>
    </location>
</feature>
<feature type="helix" evidence="2">
    <location>
        <begin position="40"/>
        <end position="50"/>
    </location>
</feature>
<feature type="strand" evidence="2">
    <location>
        <begin position="52"/>
        <end position="54"/>
    </location>
</feature>
<feature type="helix" evidence="2">
    <location>
        <begin position="78"/>
        <end position="85"/>
    </location>
</feature>
<feature type="strand" evidence="2">
    <location>
        <begin position="91"/>
        <end position="97"/>
    </location>
</feature>
<feature type="helix" evidence="2">
    <location>
        <begin position="107"/>
        <end position="114"/>
    </location>
</feature>
<feature type="turn" evidence="2">
    <location>
        <begin position="125"/>
        <end position="127"/>
    </location>
</feature>
<feature type="helix" evidence="2">
    <location>
        <begin position="129"/>
        <end position="133"/>
    </location>
</feature>
<feature type="strand" evidence="2">
    <location>
        <begin position="135"/>
        <end position="137"/>
    </location>
</feature>
<feature type="strand" evidence="2">
    <location>
        <begin position="144"/>
        <end position="146"/>
    </location>
</feature>
<feature type="turn" evidence="2">
    <location>
        <begin position="148"/>
        <end position="150"/>
    </location>
</feature>
<feature type="strand" evidence="2">
    <location>
        <begin position="151"/>
        <end position="154"/>
    </location>
</feature>
<feature type="turn" evidence="2">
    <location>
        <begin position="161"/>
        <end position="163"/>
    </location>
</feature>
<name>RL12_DICDI</name>
<comment type="similarity">
    <text evidence="1">Belongs to the universal ribosomal protein uL11 family.</text>
</comment>
<accession>Q54J50</accession>
<gene>
    <name type="primary">rpl12</name>
    <name type="ORF">DDB_G0288295</name>
</gene>
<organism>
    <name type="scientific">Dictyostelium discoideum</name>
    <name type="common">Social amoeba</name>
    <dbReference type="NCBI Taxonomy" id="44689"/>
    <lineage>
        <taxon>Eukaryota</taxon>
        <taxon>Amoebozoa</taxon>
        <taxon>Evosea</taxon>
        <taxon>Eumycetozoa</taxon>
        <taxon>Dictyostelia</taxon>
        <taxon>Dictyosteliales</taxon>
        <taxon>Dictyosteliaceae</taxon>
        <taxon>Dictyostelium</taxon>
    </lineage>
</organism>
<keyword id="KW-0002">3D-structure</keyword>
<keyword id="KW-0903">Direct protein sequencing</keyword>
<keyword id="KW-1185">Reference proteome</keyword>
<keyword id="KW-0687">Ribonucleoprotein</keyword>
<keyword id="KW-0689">Ribosomal protein</keyword>
<evidence type="ECO:0000305" key="1"/>
<evidence type="ECO:0007829" key="2">
    <source>
        <dbReference type="PDB" id="5AN9"/>
    </source>
</evidence>
<sequence>MPPKVDPSEKVEVFLRVCGGEAGAMSTLAPKLGPLGVSPKKVGDDIAKATQPWKGMKVSVKLTIQNRIAVPEVLPSASALVIKALKEPPRDRKKEKNIKHNGNIPLEEICKIAKTMRFKSLAVDFKGSVLEILGTAHSVGCKVNGKSPRDIQAGIQSGEIEVVEPK</sequence>
<dbReference type="EMBL" id="AAFI02000109">
    <property type="protein sequence ID" value="EAL63290.1"/>
    <property type="molecule type" value="Genomic_DNA"/>
</dbReference>
<dbReference type="RefSeq" id="XP_636797.1">
    <property type="nucleotide sequence ID" value="XM_631705.1"/>
</dbReference>
<dbReference type="PDB" id="5AN9">
    <property type="method" value="EM"/>
    <property type="resolution" value="3.30 A"/>
    <property type="chains" value="D=1-166"/>
</dbReference>
<dbReference type="PDB" id="5ANB">
    <property type="method" value="EM"/>
    <property type="resolution" value="4.10 A"/>
    <property type="chains" value="D=1-166"/>
</dbReference>
<dbReference type="PDB" id="5ANC">
    <property type="method" value="EM"/>
    <property type="resolution" value="4.20 A"/>
    <property type="chains" value="D=1-166"/>
</dbReference>
<dbReference type="PDB" id="6QKL">
    <property type="method" value="EM"/>
    <property type="resolution" value="3.30 A"/>
    <property type="chains" value="D=1-166"/>
</dbReference>
<dbReference type="PDBsum" id="5AN9"/>
<dbReference type="PDBsum" id="5ANB"/>
<dbReference type="PDBsum" id="5ANC"/>
<dbReference type="PDBsum" id="6QKL"/>
<dbReference type="SMR" id="Q54J50"/>
<dbReference type="FunCoup" id="Q54J50">
    <property type="interactions" value="444"/>
</dbReference>
<dbReference type="STRING" id="44689.Q54J50"/>
<dbReference type="PaxDb" id="44689-DDB0229950"/>
<dbReference type="EnsemblProtists" id="EAL63290">
    <property type="protein sequence ID" value="EAL63290"/>
    <property type="gene ID" value="DDB_G0288295"/>
</dbReference>
<dbReference type="GeneID" id="8626554"/>
<dbReference type="KEGG" id="ddi:DDB_G0288295"/>
<dbReference type="dictyBase" id="DDB_G0288295">
    <property type="gene designation" value="rpl12"/>
</dbReference>
<dbReference type="VEuPathDB" id="AmoebaDB:DDB_G0288295"/>
<dbReference type="eggNOG" id="KOG0886">
    <property type="taxonomic scope" value="Eukaryota"/>
</dbReference>
<dbReference type="HOGENOM" id="CLU_074237_5_0_1"/>
<dbReference type="InParanoid" id="Q54J50"/>
<dbReference type="OMA" id="QPPHDVI"/>
<dbReference type="PhylomeDB" id="Q54J50"/>
<dbReference type="Reactome" id="R-DDI-156827">
    <property type="pathway name" value="L13a-mediated translational silencing of Ceruloplasmin expression"/>
</dbReference>
<dbReference type="Reactome" id="R-DDI-1799339">
    <property type="pathway name" value="SRP-dependent cotranslational protein targeting to membrane"/>
</dbReference>
<dbReference type="Reactome" id="R-DDI-72689">
    <property type="pathway name" value="Formation of a pool of free 40S subunits"/>
</dbReference>
<dbReference type="Reactome" id="R-DDI-72706">
    <property type="pathway name" value="GTP hydrolysis and joining of the 60S ribosomal subunit"/>
</dbReference>
<dbReference type="Reactome" id="R-DDI-975956">
    <property type="pathway name" value="Nonsense Mediated Decay (NMD) independent of the Exon Junction Complex (EJC)"/>
</dbReference>
<dbReference type="Reactome" id="R-DDI-975957">
    <property type="pathway name" value="Nonsense Mediated Decay (NMD) enhanced by the Exon Junction Complex (EJC)"/>
</dbReference>
<dbReference type="EvolutionaryTrace" id="Q54J50"/>
<dbReference type="PRO" id="PR:Q54J50"/>
<dbReference type="Proteomes" id="UP000002195">
    <property type="component" value="Chromosome 5"/>
</dbReference>
<dbReference type="GO" id="GO:0022625">
    <property type="term" value="C:cytosolic large ribosomal subunit"/>
    <property type="evidence" value="ECO:0000318"/>
    <property type="project" value="GO_Central"/>
</dbReference>
<dbReference type="GO" id="GO:0070180">
    <property type="term" value="F:large ribosomal subunit rRNA binding"/>
    <property type="evidence" value="ECO:0000318"/>
    <property type="project" value="GO_Central"/>
</dbReference>
<dbReference type="GO" id="GO:0003735">
    <property type="term" value="F:structural constituent of ribosome"/>
    <property type="evidence" value="ECO:0000318"/>
    <property type="project" value="GO_Central"/>
</dbReference>
<dbReference type="GO" id="GO:0006412">
    <property type="term" value="P:translation"/>
    <property type="evidence" value="ECO:0000318"/>
    <property type="project" value="GO_Central"/>
</dbReference>
<dbReference type="CDD" id="cd00349">
    <property type="entry name" value="Ribosomal_L11"/>
    <property type="match status" value="1"/>
</dbReference>
<dbReference type="FunFam" id="1.10.10.250:FF:000002">
    <property type="entry name" value="60S ribosomal protein L12"/>
    <property type="match status" value="1"/>
</dbReference>
<dbReference type="FunFam" id="3.30.1550.10:FF:000002">
    <property type="entry name" value="60S ribosomal protein L12"/>
    <property type="match status" value="1"/>
</dbReference>
<dbReference type="Gene3D" id="1.10.10.250">
    <property type="entry name" value="Ribosomal protein L11, C-terminal domain"/>
    <property type="match status" value="1"/>
</dbReference>
<dbReference type="Gene3D" id="3.30.1550.10">
    <property type="entry name" value="Ribosomal protein L11/L12, N-terminal domain"/>
    <property type="match status" value="1"/>
</dbReference>
<dbReference type="HAMAP" id="MF_00736">
    <property type="entry name" value="Ribosomal_uL11"/>
    <property type="match status" value="1"/>
</dbReference>
<dbReference type="InterPro" id="IPR000911">
    <property type="entry name" value="Ribosomal_uL11"/>
</dbReference>
<dbReference type="InterPro" id="IPR020783">
    <property type="entry name" value="Ribosomal_uL11_C"/>
</dbReference>
<dbReference type="InterPro" id="IPR036769">
    <property type="entry name" value="Ribosomal_uL11_C_sf"/>
</dbReference>
<dbReference type="InterPro" id="IPR020784">
    <property type="entry name" value="Ribosomal_uL11_N"/>
</dbReference>
<dbReference type="InterPro" id="IPR036796">
    <property type="entry name" value="Ribosomal_uL11_N_sf"/>
</dbReference>
<dbReference type="PANTHER" id="PTHR11661">
    <property type="entry name" value="60S RIBOSOMAL PROTEIN L12"/>
    <property type="match status" value="1"/>
</dbReference>
<dbReference type="PANTHER" id="PTHR11661:SF2">
    <property type="entry name" value="LARGE RIBOSOMAL SUBUNIT PROTEIN UL11"/>
    <property type="match status" value="1"/>
</dbReference>
<dbReference type="Pfam" id="PF00298">
    <property type="entry name" value="Ribosomal_L11"/>
    <property type="match status" value="1"/>
</dbReference>
<dbReference type="Pfam" id="PF03946">
    <property type="entry name" value="Ribosomal_L11_N"/>
    <property type="match status" value="1"/>
</dbReference>
<dbReference type="SMART" id="SM00649">
    <property type="entry name" value="RL11"/>
    <property type="match status" value="1"/>
</dbReference>
<dbReference type="SUPFAM" id="SSF54747">
    <property type="entry name" value="Ribosomal L11/L12e N-terminal domain"/>
    <property type="match status" value="1"/>
</dbReference>
<dbReference type="SUPFAM" id="SSF46906">
    <property type="entry name" value="Ribosomal protein L11, C-terminal domain"/>
    <property type="match status" value="1"/>
</dbReference>
<reference key="1">
    <citation type="journal article" date="2005" name="Nature">
        <title>The genome of the social amoeba Dictyostelium discoideum.</title>
        <authorList>
            <person name="Eichinger L."/>
            <person name="Pachebat J.A."/>
            <person name="Gloeckner G."/>
            <person name="Rajandream M.A."/>
            <person name="Sucgang R."/>
            <person name="Berriman M."/>
            <person name="Song J."/>
            <person name="Olsen R."/>
            <person name="Szafranski K."/>
            <person name="Xu Q."/>
            <person name="Tunggal B."/>
            <person name="Kummerfeld S."/>
            <person name="Madera M."/>
            <person name="Konfortov B.A."/>
            <person name="Rivero F."/>
            <person name="Bankier A.T."/>
            <person name="Lehmann R."/>
            <person name="Hamlin N."/>
            <person name="Davies R."/>
            <person name="Gaudet P."/>
            <person name="Fey P."/>
            <person name="Pilcher K."/>
            <person name="Chen G."/>
            <person name="Saunders D."/>
            <person name="Sodergren E.J."/>
            <person name="Davis P."/>
            <person name="Kerhornou A."/>
            <person name="Nie X."/>
            <person name="Hall N."/>
            <person name="Anjard C."/>
            <person name="Hemphill L."/>
            <person name="Bason N."/>
            <person name="Farbrother P."/>
            <person name="Desany B."/>
            <person name="Just E."/>
            <person name="Morio T."/>
            <person name="Rost R."/>
            <person name="Churcher C.M."/>
            <person name="Cooper J."/>
            <person name="Haydock S."/>
            <person name="van Driessche N."/>
            <person name="Cronin A."/>
            <person name="Goodhead I."/>
            <person name="Muzny D.M."/>
            <person name="Mourier T."/>
            <person name="Pain A."/>
            <person name="Lu M."/>
            <person name="Harper D."/>
            <person name="Lindsay R."/>
            <person name="Hauser H."/>
            <person name="James K.D."/>
            <person name="Quiles M."/>
            <person name="Madan Babu M."/>
            <person name="Saito T."/>
            <person name="Buchrieser C."/>
            <person name="Wardroper A."/>
            <person name="Felder M."/>
            <person name="Thangavelu M."/>
            <person name="Johnson D."/>
            <person name="Knights A."/>
            <person name="Loulseged H."/>
            <person name="Mungall K.L."/>
            <person name="Oliver K."/>
            <person name="Price C."/>
            <person name="Quail M.A."/>
            <person name="Urushihara H."/>
            <person name="Hernandez J."/>
            <person name="Rabbinowitsch E."/>
            <person name="Steffen D."/>
            <person name="Sanders M."/>
            <person name="Ma J."/>
            <person name="Kohara Y."/>
            <person name="Sharp S."/>
            <person name="Simmonds M.N."/>
            <person name="Spiegler S."/>
            <person name="Tivey A."/>
            <person name="Sugano S."/>
            <person name="White B."/>
            <person name="Walker D."/>
            <person name="Woodward J.R."/>
            <person name="Winckler T."/>
            <person name="Tanaka Y."/>
            <person name="Shaulsky G."/>
            <person name="Schleicher M."/>
            <person name="Weinstock G.M."/>
            <person name="Rosenthal A."/>
            <person name="Cox E.C."/>
            <person name="Chisholm R.L."/>
            <person name="Gibbs R.A."/>
            <person name="Loomis W.F."/>
            <person name="Platzer M."/>
            <person name="Kay R.R."/>
            <person name="Williams J.G."/>
            <person name="Dear P.H."/>
            <person name="Noegel A.A."/>
            <person name="Barrell B.G."/>
            <person name="Kuspa A."/>
        </authorList>
    </citation>
    <scope>NUCLEOTIDE SEQUENCE [LARGE SCALE GENOMIC DNA]</scope>
    <source>
        <strain>AX4</strain>
    </source>
</reference>
<reference key="2">
    <citation type="submission" date="2010-01" db="UniProtKB">
        <authorList>
            <person name="Bienvenut W.V."/>
            <person name="Veltman D.M."/>
            <person name="Insall R.H."/>
        </authorList>
    </citation>
    <scope>PROTEIN SEQUENCE OF 17-31 AND 150-166</scope>
    <scope>IDENTIFICATION BY MASS SPECTROMETRY</scope>
</reference>
<protein>
    <recommendedName>
        <fullName evidence="1">Large ribosomal subunit protein uL11</fullName>
    </recommendedName>
    <alternativeName>
        <fullName>60S ribosomal protein L12</fullName>
    </alternativeName>
</protein>
<proteinExistence type="evidence at protein level"/>